<organism>
    <name type="scientific">Bacillus cereus (strain Q1)</name>
    <dbReference type="NCBI Taxonomy" id="361100"/>
    <lineage>
        <taxon>Bacteria</taxon>
        <taxon>Bacillati</taxon>
        <taxon>Bacillota</taxon>
        <taxon>Bacilli</taxon>
        <taxon>Bacillales</taxon>
        <taxon>Bacillaceae</taxon>
        <taxon>Bacillus</taxon>
        <taxon>Bacillus cereus group</taxon>
    </lineage>
</organism>
<gene>
    <name type="ordered locus">BCQ_4607</name>
</gene>
<accession>B9J290</accession>
<proteinExistence type="inferred from homology"/>
<name>YIDD_BACCQ</name>
<evidence type="ECO:0000255" key="1">
    <source>
        <dbReference type="HAMAP-Rule" id="MF_00386"/>
    </source>
</evidence>
<keyword id="KW-1003">Cell membrane</keyword>
<keyword id="KW-0472">Membrane</keyword>
<dbReference type="EMBL" id="CP000227">
    <property type="protein sequence ID" value="ACM15033.1"/>
    <property type="molecule type" value="Genomic_DNA"/>
</dbReference>
<dbReference type="KEGG" id="bcq:BCQ_4607"/>
<dbReference type="HOGENOM" id="CLU_144811_6_0_9"/>
<dbReference type="Proteomes" id="UP000000441">
    <property type="component" value="Chromosome"/>
</dbReference>
<dbReference type="GO" id="GO:0005886">
    <property type="term" value="C:plasma membrane"/>
    <property type="evidence" value="ECO:0007669"/>
    <property type="project" value="UniProtKB-SubCell"/>
</dbReference>
<dbReference type="HAMAP" id="MF_00386">
    <property type="entry name" value="UPF0161_YidD"/>
    <property type="match status" value="1"/>
</dbReference>
<dbReference type="InterPro" id="IPR002696">
    <property type="entry name" value="Membr_insert_effic_factor_YidD"/>
</dbReference>
<dbReference type="NCBIfam" id="TIGR00278">
    <property type="entry name" value="membrane protein insertion efficiency factor YidD"/>
    <property type="match status" value="1"/>
</dbReference>
<dbReference type="PANTHER" id="PTHR33383">
    <property type="entry name" value="MEMBRANE PROTEIN INSERTION EFFICIENCY FACTOR-RELATED"/>
    <property type="match status" value="1"/>
</dbReference>
<dbReference type="PANTHER" id="PTHR33383:SF1">
    <property type="entry name" value="MEMBRANE PROTEIN INSERTION EFFICIENCY FACTOR-RELATED"/>
    <property type="match status" value="1"/>
</dbReference>
<dbReference type="Pfam" id="PF01809">
    <property type="entry name" value="YidD"/>
    <property type="match status" value="1"/>
</dbReference>
<dbReference type="SMART" id="SM01234">
    <property type="entry name" value="Haemolytic"/>
    <property type="match status" value="1"/>
</dbReference>
<comment type="function">
    <text evidence="1">Could be involved in insertion of integral membrane proteins into the membrane.</text>
</comment>
<comment type="subcellular location">
    <subcellularLocation>
        <location evidence="1">Cell membrane</location>
        <topology evidence="1">Peripheral membrane protein</topology>
        <orientation evidence="1">Cytoplasmic side</orientation>
    </subcellularLocation>
</comment>
<comment type="similarity">
    <text evidence="1">Belongs to the UPF0161 family.</text>
</comment>
<feature type="chain" id="PRO_1000197741" description="Putative membrane protein insertion efficiency factor">
    <location>
        <begin position="1"/>
        <end position="78"/>
    </location>
</feature>
<protein>
    <recommendedName>
        <fullName evidence="1">Putative membrane protein insertion efficiency factor</fullName>
    </recommendedName>
</protein>
<sequence length="78" mass="9085">MKQIFIGIIRFYQKFISPMTPPTCRFYPTCSHYGLEAFQKHGALKGFWLTCKRILKCHPFHPGGFDPVPDKKDDKVHS</sequence>
<reference key="1">
    <citation type="journal article" date="2009" name="J. Bacteriol.">
        <title>Complete genome sequence of the extremophilic Bacillus cereus strain Q1 with industrial applications.</title>
        <authorList>
            <person name="Xiong Z."/>
            <person name="Jiang Y."/>
            <person name="Qi D."/>
            <person name="Lu H."/>
            <person name="Yang F."/>
            <person name="Yang J."/>
            <person name="Chen L."/>
            <person name="Sun L."/>
            <person name="Xu X."/>
            <person name="Xue Y."/>
            <person name="Zhu Y."/>
            <person name="Jin Q."/>
        </authorList>
    </citation>
    <scope>NUCLEOTIDE SEQUENCE [LARGE SCALE GENOMIC DNA]</scope>
    <source>
        <strain>Q1</strain>
    </source>
</reference>